<gene>
    <name evidence="4" type="primary">ppsA</name>
    <name type="ORF">AO090102000165</name>
</gene>
<comment type="function">
    <text evidence="3 6">Acyl-CoA ligase; part of the gene cluster that mediates the biosynthesis of 2,4'-dihydroxy-3'-methoxypropiophenone (PubMed:32885554). The first step of the pathway is the conversion of acetate into acetyl-CoA by the acyl-CoA ligase ppsA (PubMed:32885554). Acetyl-CoA is then used as a starter unit by the polyketide synthase ppsB and condensed with 4 malonyl-CoA unit to produce the pentaketide backbone (PubMed:32885554). During polyketide extension, the polykedite chain is probably reduced and dehydrated by the KR and PT domains, respectively (Probable). O-methylation seems to be catalyzed by an unknown methyltransferase rather than by the CMeT domain of ppsB (Probable). Two hydroxylations and one further decarboxylation step catalyzed by yet unknown enzymes are then required to yield 4'-hydroxy-3'-methoxypropiophenone (Probable). PpsC functions as a carrier protein to transport 4'-hydroxy-3'-methoxypropiophenone to a specific cell compartment in which 4'-hydroxy-3'-methoxypropiophenone is hydroxylated to 2,4'-dihydroxy-3'-methoxypropiophenone by a still to be identified enzyme (PubMed:32885554).</text>
</comment>
<comment type="catalytic activity">
    <reaction evidence="3">
        <text>acetate + ATP + CoA = acetyl-CoA + ADP + phosphate</text>
        <dbReference type="Rhea" id="RHEA:15081"/>
        <dbReference type="ChEBI" id="CHEBI:30089"/>
        <dbReference type="ChEBI" id="CHEBI:30616"/>
        <dbReference type="ChEBI" id="CHEBI:43474"/>
        <dbReference type="ChEBI" id="CHEBI:57287"/>
        <dbReference type="ChEBI" id="CHEBI:57288"/>
        <dbReference type="ChEBI" id="CHEBI:456216"/>
        <dbReference type="EC" id="6.2.1.13"/>
    </reaction>
    <physiologicalReaction direction="left-to-right" evidence="3">
        <dbReference type="Rhea" id="RHEA:15082"/>
    </physiologicalReaction>
</comment>
<comment type="catalytic activity">
    <reaction evidence="3">
        <text>propanoate + ATP + CoA = propanoyl-CoA + AMP + diphosphate</text>
        <dbReference type="Rhea" id="RHEA:20373"/>
        <dbReference type="ChEBI" id="CHEBI:17272"/>
        <dbReference type="ChEBI" id="CHEBI:30616"/>
        <dbReference type="ChEBI" id="CHEBI:33019"/>
        <dbReference type="ChEBI" id="CHEBI:57287"/>
        <dbReference type="ChEBI" id="CHEBI:57392"/>
        <dbReference type="ChEBI" id="CHEBI:456215"/>
        <dbReference type="EC" id="6.2.1.17"/>
    </reaction>
    <physiologicalReaction direction="left-to-right" evidence="3">
        <dbReference type="Rhea" id="RHEA:20374"/>
    </physiologicalReaction>
</comment>
<comment type="pathway">
    <text evidence="3">Secondary metabolite biosynthesis.</text>
</comment>
<comment type="subcellular location">
    <subcellularLocation>
        <location evidence="1">Membrane</location>
        <topology evidence="1">Single-pass membrane protein</topology>
    </subcellularLocation>
</comment>
<comment type="disruption phenotype">
    <text evidence="3">Abolishes the production of 2,4'-dihydroxy-3'-methoxypropiophenone and 4'-hydroxy-3'-methoxypropiophenone.</text>
</comment>
<comment type="similarity">
    <text evidence="5">Belongs to the ATP-dependent AMP-binding enzyme family.</text>
</comment>
<protein>
    <recommendedName>
        <fullName evidence="4">Acyl-CoA ligase ppsA</fullName>
        <ecNumber evidence="3">6.2.1.13</ecNumber>
        <ecNumber evidence="3">6.2.1.17</ecNumber>
    </recommendedName>
    <alternativeName>
        <fullName evidence="4">2,4'-dihydroxy-3'-methoxypropiophenone biosynthesis cluster protein A</fullName>
    </alternativeName>
</protein>
<name>PPSA_ASPOR</name>
<evidence type="ECO:0000255" key="1"/>
<evidence type="ECO:0000255" key="2">
    <source>
        <dbReference type="PROSITE-ProRule" id="PRU00498"/>
    </source>
</evidence>
<evidence type="ECO:0000269" key="3">
    <source>
    </source>
</evidence>
<evidence type="ECO:0000303" key="4">
    <source>
    </source>
</evidence>
<evidence type="ECO:0000305" key="5"/>
<evidence type="ECO:0000305" key="6">
    <source>
    </source>
</evidence>
<reference key="1">
    <citation type="journal article" date="2005" name="Nature">
        <title>Genome sequencing and analysis of Aspergillus oryzae.</title>
        <authorList>
            <person name="Machida M."/>
            <person name="Asai K."/>
            <person name="Sano M."/>
            <person name="Tanaka T."/>
            <person name="Kumagai T."/>
            <person name="Terai G."/>
            <person name="Kusumoto K."/>
            <person name="Arima T."/>
            <person name="Akita O."/>
            <person name="Kashiwagi Y."/>
            <person name="Abe K."/>
            <person name="Gomi K."/>
            <person name="Horiuchi H."/>
            <person name="Kitamoto K."/>
            <person name="Kobayashi T."/>
            <person name="Takeuchi M."/>
            <person name="Denning D.W."/>
            <person name="Galagan J.E."/>
            <person name="Nierman W.C."/>
            <person name="Yu J."/>
            <person name="Archer D.B."/>
            <person name="Bennett J.W."/>
            <person name="Bhatnagar D."/>
            <person name="Cleveland T.E."/>
            <person name="Fedorova N.D."/>
            <person name="Gotoh O."/>
            <person name="Horikawa H."/>
            <person name="Hosoyama A."/>
            <person name="Ichinomiya M."/>
            <person name="Igarashi R."/>
            <person name="Iwashita K."/>
            <person name="Juvvadi P.R."/>
            <person name="Kato M."/>
            <person name="Kato Y."/>
            <person name="Kin T."/>
            <person name="Kokubun A."/>
            <person name="Maeda H."/>
            <person name="Maeyama N."/>
            <person name="Maruyama J."/>
            <person name="Nagasaki H."/>
            <person name="Nakajima T."/>
            <person name="Oda K."/>
            <person name="Okada K."/>
            <person name="Paulsen I."/>
            <person name="Sakamoto K."/>
            <person name="Sawano T."/>
            <person name="Takahashi M."/>
            <person name="Takase K."/>
            <person name="Terabayashi Y."/>
            <person name="Wortman J.R."/>
            <person name="Yamada O."/>
            <person name="Yamagata Y."/>
            <person name="Anazawa H."/>
            <person name="Hata Y."/>
            <person name="Koide Y."/>
            <person name="Komori T."/>
            <person name="Koyama Y."/>
            <person name="Minetoki T."/>
            <person name="Suharnan S."/>
            <person name="Tanaka A."/>
            <person name="Isono K."/>
            <person name="Kuhara S."/>
            <person name="Ogasawara N."/>
            <person name="Kikuchi H."/>
        </authorList>
    </citation>
    <scope>NUCLEOTIDE SEQUENCE [LARGE SCALE GENOMIC DNA]</scope>
    <source>
        <strain>ATCC 42149 / RIB 40</strain>
    </source>
</reference>
<reference key="2">
    <citation type="journal article" date="2021" name="ChemBioChem">
        <title>Discovery of the 2,4'-dihydroxy-3'-methoxypropiophenone biosynthesis genes in Aspergillus oryzae.</title>
        <authorList>
            <person name="Kan E."/>
            <person name="Tomita H."/>
            <person name="Katsuyama Y."/>
            <person name="Maruyama J.I."/>
            <person name="Koyama Y."/>
            <person name="Ohnishi Y."/>
        </authorList>
    </citation>
    <scope>FUNCTION</scope>
    <scope>DISRUPTION PHENOTYPE</scope>
    <scope>CATALYTIC ACTIVITY</scope>
    <scope>PATHWAY</scope>
</reference>
<sequence length="561" mass="61699">MNSNTPTDIVSFCFETQADHNATGPILIDGLTPTRSLTLHQFRQLVCQLIAGLHEQKIQQGQCILVHLENSILYPALFLAIVGVGAVYMGAHPASSATELEHLLSLANPSLIITGRDTLSTVLQCTMSPSGGKKEKIPSDRVWVLNDIDQVLCEAFSSTPDASMGDAAYHHRRDITKLLHSGQRPWRTFDDDGQKSKITPAAMFATSGTSGLPKAAILSHHALIQQHISIHHPVPYPVTRLLTLPLFHRYGALVALFFPTRYAQPLILLPGFQLRPFLSAIHVHGVTETYLSPAMVHILIQSTPQSSSIRESLRSLRYVCVGGAPIDSRPLQSLQDMLHPEACVAQAWGMTETATVFQDRYCLPSRQFDKGSVGVVLPGYQVRLVDVSGSGRVLDNATEIPGELQVRGSGLFTSYKGHPDHTDGDGWFSTGDVMYQKNGHYFLVGRMKEMIKVRGYQVSPVELEAELAQHPLVKDAAVIGVLATDGSSELPRAYVVPLSWAERPSPEDIYDFMRQRLAGYKFLEGGVVFVDSIPRNSGGKIRRTKLSELDDQRDKLIALLT</sequence>
<feature type="chain" id="PRO_0000451833" description="Acyl-CoA ligase ppsA">
    <location>
        <begin position="1"/>
        <end position="561"/>
    </location>
</feature>
<feature type="transmembrane region" description="Helical" evidence="1">
    <location>
        <begin position="71"/>
        <end position="91"/>
    </location>
</feature>
<feature type="region of interest" description="AMP-binding" evidence="1">
    <location>
        <begin position="462"/>
        <end position="540"/>
    </location>
</feature>
<feature type="binding site" evidence="1">
    <location>
        <begin position="203"/>
        <end position="214"/>
    </location>
    <ligand>
        <name>AMP</name>
        <dbReference type="ChEBI" id="CHEBI:456215"/>
    </ligand>
</feature>
<feature type="glycosylation site" description="N-linked (GlcNAc...) asparagine" evidence="2">
    <location>
        <position position="21"/>
    </location>
</feature>
<feature type="glycosylation site" description="N-linked (GlcNAc...) asparagine" evidence="2">
    <location>
        <position position="396"/>
    </location>
</feature>
<keyword id="KW-0067">ATP-binding</keyword>
<keyword id="KW-0325">Glycoprotein</keyword>
<keyword id="KW-0436">Ligase</keyword>
<keyword id="KW-0472">Membrane</keyword>
<keyword id="KW-0547">Nucleotide-binding</keyword>
<keyword id="KW-1185">Reference proteome</keyword>
<keyword id="KW-0812">Transmembrane</keyword>
<keyword id="KW-1133">Transmembrane helix</keyword>
<dbReference type="EC" id="6.2.1.13" evidence="3"/>
<dbReference type="EC" id="6.2.1.17" evidence="3"/>
<dbReference type="EMBL" id="BA000052">
    <property type="protein sequence ID" value="BAE61264.1"/>
    <property type="molecule type" value="Genomic_DNA"/>
</dbReference>
<dbReference type="RefSeq" id="XP_001822397.1">
    <property type="nucleotide sequence ID" value="XM_001822345.2"/>
</dbReference>
<dbReference type="SMR" id="Q2UB01"/>
<dbReference type="STRING" id="510516.Q2UB01"/>
<dbReference type="GlyCosmos" id="Q2UB01">
    <property type="glycosylation" value="2 sites, No reported glycans"/>
</dbReference>
<dbReference type="EnsemblFungi" id="BAE61264">
    <property type="protein sequence ID" value="BAE61264"/>
    <property type="gene ID" value="AO090102000165"/>
</dbReference>
<dbReference type="GeneID" id="5994442"/>
<dbReference type="KEGG" id="aor:AO090102000165"/>
<dbReference type="VEuPathDB" id="FungiDB:AO090102000165"/>
<dbReference type="HOGENOM" id="CLU_000022_59_2_1"/>
<dbReference type="OMA" id="VIHEDLW"/>
<dbReference type="OrthoDB" id="70454at5052"/>
<dbReference type="Proteomes" id="UP000006564">
    <property type="component" value="Chromosome 4"/>
</dbReference>
<dbReference type="GO" id="GO:0016020">
    <property type="term" value="C:membrane"/>
    <property type="evidence" value="ECO:0007669"/>
    <property type="project" value="UniProtKB-SubCell"/>
</dbReference>
<dbReference type="GO" id="GO:0043758">
    <property type="term" value="F:acetate-CoA ligase (ADP-forming) activity"/>
    <property type="evidence" value="ECO:0007669"/>
    <property type="project" value="UniProtKB-EC"/>
</dbReference>
<dbReference type="GO" id="GO:0005524">
    <property type="term" value="F:ATP binding"/>
    <property type="evidence" value="ECO:0007669"/>
    <property type="project" value="UniProtKB-KW"/>
</dbReference>
<dbReference type="GO" id="GO:0050218">
    <property type="term" value="F:propionate-CoA ligase activity"/>
    <property type="evidence" value="ECO:0007669"/>
    <property type="project" value="UniProtKB-EC"/>
</dbReference>
<dbReference type="GO" id="GO:0019748">
    <property type="term" value="P:secondary metabolic process"/>
    <property type="evidence" value="ECO:0007669"/>
    <property type="project" value="TreeGrafter"/>
</dbReference>
<dbReference type="Gene3D" id="3.30.300.30">
    <property type="match status" value="1"/>
</dbReference>
<dbReference type="Gene3D" id="3.40.50.12780">
    <property type="entry name" value="N-terminal domain of ligase-like"/>
    <property type="match status" value="1"/>
</dbReference>
<dbReference type="InterPro" id="IPR025110">
    <property type="entry name" value="AMP-bd_C"/>
</dbReference>
<dbReference type="InterPro" id="IPR045851">
    <property type="entry name" value="AMP-bd_C_sf"/>
</dbReference>
<dbReference type="InterPro" id="IPR020845">
    <property type="entry name" value="AMP-binding_CS"/>
</dbReference>
<dbReference type="InterPro" id="IPR000873">
    <property type="entry name" value="AMP-dep_synth/lig_dom"/>
</dbReference>
<dbReference type="InterPro" id="IPR042099">
    <property type="entry name" value="ANL_N_sf"/>
</dbReference>
<dbReference type="PANTHER" id="PTHR24096:SF317">
    <property type="entry name" value="ADENYLATE-FORMING ENZYME AFEA"/>
    <property type="match status" value="1"/>
</dbReference>
<dbReference type="PANTHER" id="PTHR24096">
    <property type="entry name" value="LONG-CHAIN-FATTY-ACID--COA LIGASE"/>
    <property type="match status" value="1"/>
</dbReference>
<dbReference type="Pfam" id="PF00501">
    <property type="entry name" value="AMP-binding"/>
    <property type="match status" value="1"/>
</dbReference>
<dbReference type="Pfam" id="PF13193">
    <property type="entry name" value="AMP-binding_C"/>
    <property type="match status" value="1"/>
</dbReference>
<dbReference type="SUPFAM" id="SSF56801">
    <property type="entry name" value="Acetyl-CoA synthetase-like"/>
    <property type="match status" value="1"/>
</dbReference>
<dbReference type="PROSITE" id="PS00455">
    <property type="entry name" value="AMP_BINDING"/>
    <property type="match status" value="1"/>
</dbReference>
<organism>
    <name type="scientific">Aspergillus oryzae (strain ATCC 42149 / RIB 40)</name>
    <name type="common">Yellow koji mold</name>
    <dbReference type="NCBI Taxonomy" id="510516"/>
    <lineage>
        <taxon>Eukaryota</taxon>
        <taxon>Fungi</taxon>
        <taxon>Dikarya</taxon>
        <taxon>Ascomycota</taxon>
        <taxon>Pezizomycotina</taxon>
        <taxon>Eurotiomycetes</taxon>
        <taxon>Eurotiomycetidae</taxon>
        <taxon>Eurotiales</taxon>
        <taxon>Aspergillaceae</taxon>
        <taxon>Aspergillus</taxon>
        <taxon>Aspergillus subgen. Circumdati</taxon>
    </lineage>
</organism>
<proteinExistence type="evidence at protein level"/>
<accession>Q2UB01</accession>